<reference key="1">
    <citation type="journal article" date="2007" name="J. Bacteriol.">
        <title>The complete genome sequence of Campylobacter jejuni strain 81116 (NCTC11828).</title>
        <authorList>
            <person name="Pearson B.M."/>
            <person name="Gaskin D.J.H."/>
            <person name="Segers R.P.A.M."/>
            <person name="Wells J.M."/>
            <person name="Nuijten P.J.M."/>
            <person name="van Vliet A.H.M."/>
        </authorList>
    </citation>
    <scope>NUCLEOTIDE SEQUENCE [LARGE SCALE GENOMIC DNA]</scope>
    <source>
        <strain>81116 / NCTC 11828</strain>
    </source>
</reference>
<organism>
    <name type="scientific">Campylobacter jejuni subsp. jejuni serotype O:6 (strain 81116 / NCTC 11828)</name>
    <dbReference type="NCBI Taxonomy" id="407148"/>
    <lineage>
        <taxon>Bacteria</taxon>
        <taxon>Pseudomonadati</taxon>
        <taxon>Campylobacterota</taxon>
        <taxon>Epsilonproteobacteria</taxon>
        <taxon>Campylobacterales</taxon>
        <taxon>Campylobacteraceae</taxon>
        <taxon>Campylobacter</taxon>
    </lineage>
</organism>
<gene>
    <name evidence="2" type="primary">tuf</name>
    <name type="ordered locus">C8J_0443</name>
</gene>
<name>EFTU_CAMJ8</name>
<keyword id="KW-0963">Cytoplasm</keyword>
<keyword id="KW-0251">Elongation factor</keyword>
<keyword id="KW-0342">GTP-binding</keyword>
<keyword id="KW-0378">Hydrolase</keyword>
<keyword id="KW-0460">Magnesium</keyword>
<keyword id="KW-0479">Metal-binding</keyword>
<keyword id="KW-0547">Nucleotide-binding</keyword>
<keyword id="KW-0648">Protein biosynthesis</keyword>
<feature type="chain" id="PRO_1000071360" description="Elongation factor Tu">
    <location>
        <begin position="1"/>
        <end position="399"/>
    </location>
</feature>
<feature type="domain" description="tr-type G">
    <location>
        <begin position="10"/>
        <end position="209"/>
    </location>
</feature>
<feature type="region of interest" description="G1" evidence="1">
    <location>
        <begin position="19"/>
        <end position="26"/>
    </location>
</feature>
<feature type="region of interest" description="G2" evidence="1">
    <location>
        <begin position="60"/>
        <end position="64"/>
    </location>
</feature>
<feature type="region of interest" description="G3" evidence="1">
    <location>
        <begin position="81"/>
        <end position="84"/>
    </location>
</feature>
<feature type="region of interest" description="G4" evidence="1">
    <location>
        <begin position="136"/>
        <end position="139"/>
    </location>
</feature>
<feature type="region of interest" description="G5" evidence="1">
    <location>
        <begin position="174"/>
        <end position="176"/>
    </location>
</feature>
<feature type="binding site" evidence="2">
    <location>
        <begin position="19"/>
        <end position="26"/>
    </location>
    <ligand>
        <name>GTP</name>
        <dbReference type="ChEBI" id="CHEBI:37565"/>
    </ligand>
</feature>
<feature type="binding site" evidence="2">
    <location>
        <position position="26"/>
    </location>
    <ligand>
        <name>Mg(2+)</name>
        <dbReference type="ChEBI" id="CHEBI:18420"/>
    </ligand>
</feature>
<feature type="binding site" evidence="2">
    <location>
        <begin position="81"/>
        <end position="85"/>
    </location>
    <ligand>
        <name>GTP</name>
        <dbReference type="ChEBI" id="CHEBI:37565"/>
    </ligand>
</feature>
<feature type="binding site" evidence="2">
    <location>
        <begin position="136"/>
        <end position="139"/>
    </location>
    <ligand>
        <name>GTP</name>
        <dbReference type="ChEBI" id="CHEBI:37565"/>
    </ligand>
</feature>
<comment type="function">
    <text evidence="2">GTP hydrolase that promotes the GTP-dependent binding of aminoacyl-tRNA to the A-site of ribosomes during protein biosynthesis.</text>
</comment>
<comment type="catalytic activity">
    <reaction evidence="2">
        <text>GTP + H2O = GDP + phosphate + H(+)</text>
        <dbReference type="Rhea" id="RHEA:19669"/>
        <dbReference type="ChEBI" id="CHEBI:15377"/>
        <dbReference type="ChEBI" id="CHEBI:15378"/>
        <dbReference type="ChEBI" id="CHEBI:37565"/>
        <dbReference type="ChEBI" id="CHEBI:43474"/>
        <dbReference type="ChEBI" id="CHEBI:58189"/>
        <dbReference type="EC" id="3.6.5.3"/>
    </reaction>
    <physiologicalReaction direction="left-to-right" evidence="2">
        <dbReference type="Rhea" id="RHEA:19670"/>
    </physiologicalReaction>
</comment>
<comment type="subunit">
    <text evidence="2">Monomer.</text>
</comment>
<comment type="subcellular location">
    <subcellularLocation>
        <location evidence="2">Cytoplasm</location>
    </subcellularLocation>
</comment>
<comment type="similarity">
    <text evidence="2">Belongs to the TRAFAC class translation factor GTPase superfamily. Classic translation factor GTPase family. EF-Tu/EF-1A subfamily.</text>
</comment>
<protein>
    <recommendedName>
        <fullName evidence="2">Elongation factor Tu</fullName>
        <shortName evidence="2">EF-Tu</shortName>
        <ecNumber evidence="2">3.6.5.3</ecNumber>
    </recommendedName>
</protein>
<dbReference type="EC" id="3.6.5.3" evidence="2"/>
<dbReference type="EMBL" id="CP000814">
    <property type="protein sequence ID" value="ABV52042.1"/>
    <property type="molecule type" value="Genomic_DNA"/>
</dbReference>
<dbReference type="RefSeq" id="WP_002855271.1">
    <property type="nucleotide sequence ID" value="NC_009839.1"/>
</dbReference>
<dbReference type="SMR" id="A8FKQ5"/>
<dbReference type="KEGG" id="cju:C8J_0443"/>
<dbReference type="HOGENOM" id="CLU_007265_0_1_7"/>
<dbReference type="GO" id="GO:0005829">
    <property type="term" value="C:cytosol"/>
    <property type="evidence" value="ECO:0007669"/>
    <property type="project" value="TreeGrafter"/>
</dbReference>
<dbReference type="GO" id="GO:0005525">
    <property type="term" value="F:GTP binding"/>
    <property type="evidence" value="ECO:0007669"/>
    <property type="project" value="UniProtKB-UniRule"/>
</dbReference>
<dbReference type="GO" id="GO:0003924">
    <property type="term" value="F:GTPase activity"/>
    <property type="evidence" value="ECO:0007669"/>
    <property type="project" value="InterPro"/>
</dbReference>
<dbReference type="GO" id="GO:0003746">
    <property type="term" value="F:translation elongation factor activity"/>
    <property type="evidence" value="ECO:0007669"/>
    <property type="project" value="UniProtKB-UniRule"/>
</dbReference>
<dbReference type="CDD" id="cd01884">
    <property type="entry name" value="EF_Tu"/>
    <property type="match status" value="1"/>
</dbReference>
<dbReference type="CDD" id="cd03697">
    <property type="entry name" value="EFTU_II"/>
    <property type="match status" value="1"/>
</dbReference>
<dbReference type="CDD" id="cd03707">
    <property type="entry name" value="EFTU_III"/>
    <property type="match status" value="1"/>
</dbReference>
<dbReference type="FunFam" id="2.40.30.10:FF:000001">
    <property type="entry name" value="Elongation factor Tu"/>
    <property type="match status" value="1"/>
</dbReference>
<dbReference type="FunFam" id="3.40.50.300:FF:000003">
    <property type="entry name" value="Elongation factor Tu"/>
    <property type="match status" value="1"/>
</dbReference>
<dbReference type="Gene3D" id="3.40.50.300">
    <property type="entry name" value="P-loop containing nucleotide triphosphate hydrolases"/>
    <property type="match status" value="1"/>
</dbReference>
<dbReference type="Gene3D" id="2.40.30.10">
    <property type="entry name" value="Translation factors"/>
    <property type="match status" value="2"/>
</dbReference>
<dbReference type="HAMAP" id="MF_00118_B">
    <property type="entry name" value="EF_Tu_B"/>
    <property type="match status" value="1"/>
</dbReference>
<dbReference type="InterPro" id="IPR041709">
    <property type="entry name" value="EF-Tu_GTP-bd"/>
</dbReference>
<dbReference type="InterPro" id="IPR050055">
    <property type="entry name" value="EF-Tu_GTPase"/>
</dbReference>
<dbReference type="InterPro" id="IPR004161">
    <property type="entry name" value="EFTu-like_2"/>
</dbReference>
<dbReference type="InterPro" id="IPR033720">
    <property type="entry name" value="EFTU_2"/>
</dbReference>
<dbReference type="InterPro" id="IPR031157">
    <property type="entry name" value="G_TR_CS"/>
</dbReference>
<dbReference type="InterPro" id="IPR027417">
    <property type="entry name" value="P-loop_NTPase"/>
</dbReference>
<dbReference type="InterPro" id="IPR005225">
    <property type="entry name" value="Small_GTP-bd"/>
</dbReference>
<dbReference type="InterPro" id="IPR000795">
    <property type="entry name" value="T_Tr_GTP-bd_dom"/>
</dbReference>
<dbReference type="InterPro" id="IPR009000">
    <property type="entry name" value="Transl_B-barrel_sf"/>
</dbReference>
<dbReference type="InterPro" id="IPR009001">
    <property type="entry name" value="Transl_elong_EF1A/Init_IF2_C"/>
</dbReference>
<dbReference type="InterPro" id="IPR004541">
    <property type="entry name" value="Transl_elong_EFTu/EF1A_bac/org"/>
</dbReference>
<dbReference type="InterPro" id="IPR004160">
    <property type="entry name" value="Transl_elong_EFTu/EF1A_C"/>
</dbReference>
<dbReference type="NCBIfam" id="TIGR00485">
    <property type="entry name" value="EF-Tu"/>
    <property type="match status" value="1"/>
</dbReference>
<dbReference type="NCBIfam" id="NF000766">
    <property type="entry name" value="PRK00049.1"/>
    <property type="match status" value="1"/>
</dbReference>
<dbReference type="NCBIfam" id="NF009372">
    <property type="entry name" value="PRK12735.1"/>
    <property type="match status" value="1"/>
</dbReference>
<dbReference type="NCBIfam" id="NF009373">
    <property type="entry name" value="PRK12736.1"/>
    <property type="match status" value="1"/>
</dbReference>
<dbReference type="NCBIfam" id="TIGR00231">
    <property type="entry name" value="small_GTP"/>
    <property type="match status" value="1"/>
</dbReference>
<dbReference type="PANTHER" id="PTHR43721:SF22">
    <property type="entry name" value="ELONGATION FACTOR TU, MITOCHONDRIAL"/>
    <property type="match status" value="1"/>
</dbReference>
<dbReference type="PANTHER" id="PTHR43721">
    <property type="entry name" value="ELONGATION FACTOR TU-RELATED"/>
    <property type="match status" value="1"/>
</dbReference>
<dbReference type="Pfam" id="PF00009">
    <property type="entry name" value="GTP_EFTU"/>
    <property type="match status" value="1"/>
</dbReference>
<dbReference type="Pfam" id="PF03144">
    <property type="entry name" value="GTP_EFTU_D2"/>
    <property type="match status" value="1"/>
</dbReference>
<dbReference type="Pfam" id="PF03143">
    <property type="entry name" value="GTP_EFTU_D3"/>
    <property type="match status" value="1"/>
</dbReference>
<dbReference type="PRINTS" id="PR00315">
    <property type="entry name" value="ELONGATNFCT"/>
</dbReference>
<dbReference type="SUPFAM" id="SSF50465">
    <property type="entry name" value="EF-Tu/eEF-1alpha/eIF2-gamma C-terminal domain"/>
    <property type="match status" value="1"/>
</dbReference>
<dbReference type="SUPFAM" id="SSF52540">
    <property type="entry name" value="P-loop containing nucleoside triphosphate hydrolases"/>
    <property type="match status" value="1"/>
</dbReference>
<dbReference type="SUPFAM" id="SSF50447">
    <property type="entry name" value="Translation proteins"/>
    <property type="match status" value="1"/>
</dbReference>
<dbReference type="PROSITE" id="PS00301">
    <property type="entry name" value="G_TR_1"/>
    <property type="match status" value="1"/>
</dbReference>
<dbReference type="PROSITE" id="PS51722">
    <property type="entry name" value="G_TR_2"/>
    <property type="match status" value="1"/>
</dbReference>
<accession>A8FKQ5</accession>
<sequence length="399" mass="43594">MAKEKFSRNKPHVNIGTIGHVDHGKTTLTAAISAVLSRRGLAELKDYDNIDNAPEEKERGITIATSHIEYETDNRHYAHVDCPGHADYVKNMITGAAQMDGAILVVSAADGPMPQTREHILLSRQVGVPYIVVFMNKADMVDDAELLELVEMEIRELLSSYDFPGDDTPIISGSALKALEEAKAGQDGEWSAKIMDLMAAVDSYIPTPTRDTEKDFLMPIEDVFSISGRGTVVTGRIEKGVVKVGDTIEIVGIKDTQTTTVTGVEMFRKEMDQGEAGDNVGVLLRGTKKEEVIRGMVLAKPKSITPHTDFEAEVYILNKDEGGRHTPFFNNYRPQFYVRTTDVTGSIKLADGVEMVMPGENVRITVSLIAPVALEEGTRFAIREGGKTVGSGVVSKIIK</sequence>
<proteinExistence type="inferred from homology"/>
<evidence type="ECO:0000250" key="1"/>
<evidence type="ECO:0000255" key="2">
    <source>
        <dbReference type="HAMAP-Rule" id="MF_00118"/>
    </source>
</evidence>